<reference key="1">
    <citation type="journal article" date="2005" name="Arch. Microbiol.">
        <title>The genome sequence of an anaerobic aromatic-degrading denitrifying bacterium, strain EbN1.</title>
        <authorList>
            <person name="Rabus R."/>
            <person name="Kube M."/>
            <person name="Heider J."/>
            <person name="Beck A."/>
            <person name="Heitmann K."/>
            <person name="Widdel F."/>
            <person name="Reinhardt R."/>
        </authorList>
    </citation>
    <scope>NUCLEOTIDE SEQUENCE [LARGE SCALE GENOMIC DNA]</scope>
    <source>
        <strain>DSM 19018 / LMG 30748 / EbN1</strain>
    </source>
</reference>
<name>FMT_AROAE</name>
<protein>
    <recommendedName>
        <fullName evidence="1">Methionyl-tRNA formyltransferase</fullName>
        <ecNumber evidence="1">2.1.2.9</ecNumber>
    </recommendedName>
</protein>
<keyword id="KW-0648">Protein biosynthesis</keyword>
<keyword id="KW-1185">Reference proteome</keyword>
<keyword id="KW-0808">Transferase</keyword>
<comment type="function">
    <text evidence="1">Attaches a formyl group to the free amino group of methionyl-tRNA(fMet). The formyl group appears to play a dual role in the initiator identity of N-formylmethionyl-tRNA by promoting its recognition by IF2 and preventing the misappropriation of this tRNA by the elongation apparatus.</text>
</comment>
<comment type="catalytic activity">
    <reaction evidence="1">
        <text>L-methionyl-tRNA(fMet) + (6R)-10-formyltetrahydrofolate = N-formyl-L-methionyl-tRNA(fMet) + (6S)-5,6,7,8-tetrahydrofolate + H(+)</text>
        <dbReference type="Rhea" id="RHEA:24380"/>
        <dbReference type="Rhea" id="RHEA-COMP:9952"/>
        <dbReference type="Rhea" id="RHEA-COMP:9953"/>
        <dbReference type="ChEBI" id="CHEBI:15378"/>
        <dbReference type="ChEBI" id="CHEBI:57453"/>
        <dbReference type="ChEBI" id="CHEBI:78530"/>
        <dbReference type="ChEBI" id="CHEBI:78844"/>
        <dbReference type="ChEBI" id="CHEBI:195366"/>
        <dbReference type="EC" id="2.1.2.9"/>
    </reaction>
</comment>
<comment type="similarity">
    <text evidence="1">Belongs to the Fmt family.</text>
</comment>
<organism>
    <name type="scientific">Aromatoleum aromaticum (strain DSM 19018 / LMG 30748 / EbN1)</name>
    <name type="common">Azoarcus sp. (strain EbN1)</name>
    <dbReference type="NCBI Taxonomy" id="76114"/>
    <lineage>
        <taxon>Bacteria</taxon>
        <taxon>Pseudomonadati</taxon>
        <taxon>Pseudomonadota</taxon>
        <taxon>Betaproteobacteria</taxon>
        <taxon>Rhodocyclales</taxon>
        <taxon>Rhodocyclaceae</taxon>
        <taxon>Aromatoleum</taxon>
    </lineage>
</organism>
<feature type="chain" id="PRO_0000082909" description="Methionyl-tRNA formyltransferase">
    <location>
        <begin position="1"/>
        <end position="316"/>
    </location>
</feature>
<feature type="binding site" evidence="1">
    <location>
        <begin position="114"/>
        <end position="117"/>
    </location>
    <ligand>
        <name>(6S)-5,6,7,8-tetrahydrofolate</name>
        <dbReference type="ChEBI" id="CHEBI:57453"/>
    </ligand>
</feature>
<accession>Q5P4H6</accession>
<proteinExistence type="inferred from homology"/>
<evidence type="ECO:0000255" key="1">
    <source>
        <dbReference type="HAMAP-Rule" id="MF_00182"/>
    </source>
</evidence>
<dbReference type="EC" id="2.1.2.9" evidence="1"/>
<dbReference type="EMBL" id="CR555306">
    <property type="protein sequence ID" value="CAI07787.1"/>
    <property type="molecule type" value="Genomic_DNA"/>
</dbReference>
<dbReference type="RefSeq" id="WP_011237501.1">
    <property type="nucleotide sequence ID" value="NC_006513.1"/>
</dbReference>
<dbReference type="SMR" id="Q5P4H6"/>
<dbReference type="STRING" id="76114.ebA2954"/>
<dbReference type="KEGG" id="eba:ebA2954"/>
<dbReference type="eggNOG" id="COG0223">
    <property type="taxonomic scope" value="Bacteria"/>
</dbReference>
<dbReference type="HOGENOM" id="CLU_033347_1_2_4"/>
<dbReference type="OrthoDB" id="9802815at2"/>
<dbReference type="Proteomes" id="UP000006552">
    <property type="component" value="Chromosome"/>
</dbReference>
<dbReference type="GO" id="GO:0005829">
    <property type="term" value="C:cytosol"/>
    <property type="evidence" value="ECO:0007669"/>
    <property type="project" value="TreeGrafter"/>
</dbReference>
<dbReference type="GO" id="GO:0004479">
    <property type="term" value="F:methionyl-tRNA formyltransferase activity"/>
    <property type="evidence" value="ECO:0007669"/>
    <property type="project" value="UniProtKB-UniRule"/>
</dbReference>
<dbReference type="CDD" id="cd08646">
    <property type="entry name" value="FMT_core_Met-tRNA-FMT_N"/>
    <property type="match status" value="1"/>
</dbReference>
<dbReference type="CDD" id="cd08704">
    <property type="entry name" value="Met_tRNA_FMT_C"/>
    <property type="match status" value="1"/>
</dbReference>
<dbReference type="Gene3D" id="3.10.25.10">
    <property type="entry name" value="Formyl transferase, C-terminal domain"/>
    <property type="match status" value="1"/>
</dbReference>
<dbReference type="Gene3D" id="3.40.50.170">
    <property type="entry name" value="Formyl transferase, N-terminal domain"/>
    <property type="match status" value="1"/>
</dbReference>
<dbReference type="HAMAP" id="MF_00182">
    <property type="entry name" value="Formyl_trans"/>
    <property type="match status" value="1"/>
</dbReference>
<dbReference type="InterPro" id="IPR005794">
    <property type="entry name" value="Fmt"/>
</dbReference>
<dbReference type="InterPro" id="IPR005793">
    <property type="entry name" value="Formyl_trans_C"/>
</dbReference>
<dbReference type="InterPro" id="IPR037022">
    <property type="entry name" value="Formyl_trans_C_sf"/>
</dbReference>
<dbReference type="InterPro" id="IPR002376">
    <property type="entry name" value="Formyl_transf_N"/>
</dbReference>
<dbReference type="InterPro" id="IPR036477">
    <property type="entry name" value="Formyl_transf_N_sf"/>
</dbReference>
<dbReference type="InterPro" id="IPR011034">
    <property type="entry name" value="Formyl_transferase-like_C_sf"/>
</dbReference>
<dbReference type="InterPro" id="IPR001555">
    <property type="entry name" value="GART_AS"/>
</dbReference>
<dbReference type="InterPro" id="IPR044135">
    <property type="entry name" value="Met-tRNA-FMT_C"/>
</dbReference>
<dbReference type="InterPro" id="IPR041711">
    <property type="entry name" value="Met-tRNA-FMT_N"/>
</dbReference>
<dbReference type="NCBIfam" id="TIGR00460">
    <property type="entry name" value="fmt"/>
    <property type="match status" value="1"/>
</dbReference>
<dbReference type="PANTHER" id="PTHR11138">
    <property type="entry name" value="METHIONYL-TRNA FORMYLTRANSFERASE"/>
    <property type="match status" value="1"/>
</dbReference>
<dbReference type="PANTHER" id="PTHR11138:SF5">
    <property type="entry name" value="METHIONYL-TRNA FORMYLTRANSFERASE, MITOCHONDRIAL"/>
    <property type="match status" value="1"/>
</dbReference>
<dbReference type="Pfam" id="PF02911">
    <property type="entry name" value="Formyl_trans_C"/>
    <property type="match status" value="1"/>
</dbReference>
<dbReference type="Pfam" id="PF00551">
    <property type="entry name" value="Formyl_trans_N"/>
    <property type="match status" value="1"/>
</dbReference>
<dbReference type="SUPFAM" id="SSF50486">
    <property type="entry name" value="FMT C-terminal domain-like"/>
    <property type="match status" value="1"/>
</dbReference>
<dbReference type="SUPFAM" id="SSF53328">
    <property type="entry name" value="Formyltransferase"/>
    <property type="match status" value="1"/>
</dbReference>
<dbReference type="PROSITE" id="PS00373">
    <property type="entry name" value="GART"/>
    <property type="match status" value="1"/>
</dbReference>
<gene>
    <name evidence="1" type="primary">fmt</name>
    <name type="ordered locus">AZOSEA16620</name>
    <name type="ORF">ebA2954</name>
</gene>
<sequence>MTAAPLKVAFAGTPEFAAAALEAILAAGFEVPLVLTQPDRPAGRGMKLSPSPVKQLALAHGIAVDQPSSLRGEEQRATLAACAPDVLVVAAYGLILPRAVLDLPRFGCLNIHASLLPRWRGAAPIHRAIEAGDTETGITIMQMDEGLDTGPMLMKHAVPIGPADTTGALHDRLAALGAQMIVEALRRLPSGELVAMPQPAEGATYAGKIGKAEAVIDWQCDASSVARAVRAFNPFPGAVASLRQVPLKIWFAEPVAGHGEPGTVLVADADGIVVACGTQAVRLAQLQKPGSRRLAAGEFLRGFPVSAGERFEAAAR</sequence>